<evidence type="ECO:0000255" key="1">
    <source>
        <dbReference type="HAMAP-Rule" id="MF_01224"/>
    </source>
</evidence>
<reference key="1">
    <citation type="journal article" date="2008" name="PLoS ONE">
        <title>A recalibrated molecular clock and independent origins for the cholera pandemic clones.</title>
        <authorList>
            <person name="Feng L."/>
            <person name="Reeves P.R."/>
            <person name="Lan R."/>
            <person name="Ren Y."/>
            <person name="Gao C."/>
            <person name="Zhou Z."/>
            <person name="Ren Y."/>
            <person name="Cheng J."/>
            <person name="Wang W."/>
            <person name="Wang J."/>
            <person name="Qian W."/>
            <person name="Li D."/>
            <person name="Wang L."/>
        </authorList>
    </citation>
    <scope>NUCLEOTIDE SEQUENCE [LARGE SCALE GENOMIC DNA]</scope>
    <source>
        <strain>M66-2</strain>
    </source>
</reference>
<gene>
    <name evidence="1" type="primary">moaC</name>
    <name type="ordered locus">VCM66_0981</name>
</gene>
<sequence length="160" mass="17340">MMSQLTHINASGEANMVDVSNKADTVREARAEAYVRMAPETLQLILSGQHHKGDVFATARIAGIQAAKRTWELIPLCHPLLLSKVEVQLEALPEQSSVRIESLCKLSGKTGVEMEALTAASVAALTIYDMCKAVQKDIVIENVRLLEKSGGKSGHFKVDA</sequence>
<dbReference type="EC" id="4.6.1.17" evidence="1"/>
<dbReference type="EMBL" id="CP001233">
    <property type="protein sequence ID" value="ACP05299.1"/>
    <property type="molecule type" value="Genomic_DNA"/>
</dbReference>
<dbReference type="SMR" id="C3LTS3"/>
<dbReference type="KEGG" id="vcm:VCM66_0981"/>
<dbReference type="HOGENOM" id="CLU_074693_1_1_6"/>
<dbReference type="UniPathway" id="UPA00344"/>
<dbReference type="Proteomes" id="UP000001217">
    <property type="component" value="Chromosome I"/>
</dbReference>
<dbReference type="GO" id="GO:0061799">
    <property type="term" value="F:cyclic pyranopterin monophosphate synthase activity"/>
    <property type="evidence" value="ECO:0007669"/>
    <property type="project" value="UniProtKB-UniRule"/>
</dbReference>
<dbReference type="GO" id="GO:0061798">
    <property type="term" value="F:GTP 3',8'-cyclase activity"/>
    <property type="evidence" value="ECO:0007669"/>
    <property type="project" value="TreeGrafter"/>
</dbReference>
<dbReference type="GO" id="GO:0006777">
    <property type="term" value="P:Mo-molybdopterin cofactor biosynthetic process"/>
    <property type="evidence" value="ECO:0007669"/>
    <property type="project" value="UniProtKB-UniRule"/>
</dbReference>
<dbReference type="CDD" id="cd01420">
    <property type="entry name" value="MoaC_PE"/>
    <property type="match status" value="1"/>
</dbReference>
<dbReference type="FunFam" id="3.30.70.640:FF:000001">
    <property type="entry name" value="Cyclic pyranopterin monophosphate synthase"/>
    <property type="match status" value="1"/>
</dbReference>
<dbReference type="Gene3D" id="3.30.70.640">
    <property type="entry name" value="Molybdopterin cofactor biosynthesis C (MoaC) domain"/>
    <property type="match status" value="1"/>
</dbReference>
<dbReference type="HAMAP" id="MF_01224_B">
    <property type="entry name" value="MoaC_B"/>
    <property type="match status" value="1"/>
</dbReference>
<dbReference type="InterPro" id="IPR023045">
    <property type="entry name" value="MoaC"/>
</dbReference>
<dbReference type="InterPro" id="IPR047594">
    <property type="entry name" value="MoaC_bact/euk"/>
</dbReference>
<dbReference type="InterPro" id="IPR036522">
    <property type="entry name" value="MoaC_sf"/>
</dbReference>
<dbReference type="InterPro" id="IPR050105">
    <property type="entry name" value="MoCo_biosynth_MoaA/MoaC"/>
</dbReference>
<dbReference type="InterPro" id="IPR002820">
    <property type="entry name" value="Mopterin_CF_biosynth-C_dom"/>
</dbReference>
<dbReference type="NCBIfam" id="TIGR00581">
    <property type="entry name" value="moaC"/>
    <property type="match status" value="1"/>
</dbReference>
<dbReference type="NCBIfam" id="NF006870">
    <property type="entry name" value="PRK09364.1"/>
    <property type="match status" value="1"/>
</dbReference>
<dbReference type="PANTHER" id="PTHR22960:SF0">
    <property type="entry name" value="MOLYBDENUM COFACTOR BIOSYNTHESIS PROTEIN 1"/>
    <property type="match status" value="1"/>
</dbReference>
<dbReference type="PANTHER" id="PTHR22960">
    <property type="entry name" value="MOLYBDOPTERIN COFACTOR SYNTHESIS PROTEIN A"/>
    <property type="match status" value="1"/>
</dbReference>
<dbReference type="Pfam" id="PF01967">
    <property type="entry name" value="MoaC"/>
    <property type="match status" value="1"/>
</dbReference>
<dbReference type="SUPFAM" id="SSF55040">
    <property type="entry name" value="Molybdenum cofactor biosynthesis protein C, MoaC"/>
    <property type="match status" value="1"/>
</dbReference>
<organism>
    <name type="scientific">Vibrio cholerae serotype O1 (strain M66-2)</name>
    <dbReference type="NCBI Taxonomy" id="579112"/>
    <lineage>
        <taxon>Bacteria</taxon>
        <taxon>Pseudomonadati</taxon>
        <taxon>Pseudomonadota</taxon>
        <taxon>Gammaproteobacteria</taxon>
        <taxon>Vibrionales</taxon>
        <taxon>Vibrionaceae</taxon>
        <taxon>Vibrio</taxon>
    </lineage>
</organism>
<protein>
    <recommendedName>
        <fullName evidence="1">Cyclic pyranopterin monophosphate synthase</fullName>
        <ecNumber evidence="1">4.6.1.17</ecNumber>
    </recommendedName>
    <alternativeName>
        <fullName evidence="1">Molybdenum cofactor biosynthesis protein C</fullName>
    </alternativeName>
</protein>
<proteinExistence type="inferred from homology"/>
<keyword id="KW-0456">Lyase</keyword>
<keyword id="KW-0501">Molybdenum cofactor biosynthesis</keyword>
<accession>C3LTS3</accession>
<name>MOAC_VIBCM</name>
<feature type="chain" id="PRO_1000164905" description="Cyclic pyranopterin monophosphate synthase">
    <location>
        <begin position="1"/>
        <end position="160"/>
    </location>
</feature>
<feature type="active site" evidence="1">
    <location>
        <position position="129"/>
    </location>
</feature>
<feature type="binding site" evidence="1">
    <location>
        <begin position="76"/>
        <end position="78"/>
    </location>
    <ligand>
        <name>substrate</name>
    </ligand>
</feature>
<feature type="binding site" evidence="1">
    <location>
        <begin position="114"/>
        <end position="115"/>
    </location>
    <ligand>
        <name>substrate</name>
    </ligand>
</feature>
<comment type="function">
    <text evidence="1">Catalyzes the conversion of (8S)-3',8-cyclo-7,8-dihydroguanosine 5'-triphosphate to cyclic pyranopterin monophosphate (cPMP).</text>
</comment>
<comment type="catalytic activity">
    <reaction evidence="1">
        <text>(8S)-3',8-cyclo-7,8-dihydroguanosine 5'-triphosphate = cyclic pyranopterin phosphate + diphosphate</text>
        <dbReference type="Rhea" id="RHEA:49580"/>
        <dbReference type="ChEBI" id="CHEBI:33019"/>
        <dbReference type="ChEBI" id="CHEBI:59648"/>
        <dbReference type="ChEBI" id="CHEBI:131766"/>
        <dbReference type="EC" id="4.6.1.17"/>
    </reaction>
</comment>
<comment type="pathway">
    <text evidence="1">Cofactor biosynthesis; molybdopterin biosynthesis.</text>
</comment>
<comment type="subunit">
    <text evidence="1">Homohexamer; trimer of dimers.</text>
</comment>
<comment type="similarity">
    <text evidence="1">Belongs to the MoaC family.</text>
</comment>